<name>SPT_ARATH</name>
<protein>
    <recommendedName>
        <fullName>Transcription factor SPATULA</fullName>
    </recommendedName>
    <alternativeName>
        <fullName>Basic helix-loop-helix protein 24</fullName>
        <shortName>AtbHLH24</shortName>
        <shortName>bHLH 24</shortName>
    </alternativeName>
    <alternativeName>
        <fullName>Transcription factor EN 99</fullName>
    </alternativeName>
    <alternativeName>
        <fullName>bHLH transcription factor bHLH024</fullName>
    </alternativeName>
</protein>
<gene>
    <name type="primary">SPT</name>
    <name type="synonym">BHLH24</name>
    <name type="synonym">EN99</name>
    <name type="ordered locus">At4g36930</name>
    <name type="ORF">AP22.25</name>
    <name type="ORF">C7A10.430</name>
</gene>
<feature type="chain" id="PRO_0000127445" description="Transcription factor SPATULA">
    <location>
        <begin position="1"/>
        <end position="373"/>
    </location>
</feature>
<feature type="domain" description="bHLH" evidence="1">
    <location>
        <begin position="197"/>
        <end position="246"/>
    </location>
</feature>
<feature type="region of interest" description="Disordered" evidence="2">
    <location>
        <begin position="1"/>
        <end position="46"/>
    </location>
</feature>
<feature type="region of interest" description="Disordered" evidence="2">
    <location>
        <begin position="141"/>
        <end position="210"/>
    </location>
</feature>
<feature type="compositionally biased region" description="Basic and acidic residues" evidence="2">
    <location>
        <begin position="1"/>
        <end position="21"/>
    </location>
</feature>
<feature type="compositionally biased region" description="Low complexity" evidence="2">
    <location>
        <begin position="141"/>
        <end position="160"/>
    </location>
</feature>
<feature type="compositionally biased region" description="Acidic residues" evidence="2">
    <location>
        <begin position="161"/>
        <end position="177"/>
    </location>
</feature>
<feature type="compositionally biased region" description="Low complexity" evidence="2">
    <location>
        <begin position="182"/>
        <end position="191"/>
    </location>
</feature>
<feature type="compositionally biased region" description="Basic and acidic residues" evidence="2">
    <location>
        <begin position="197"/>
        <end position="210"/>
    </location>
</feature>
<feature type="mutagenesis site" description="In spt-2; affected carpel fusion and abolished transmitting tract production." evidence="4">
    <original>R</original>
    <variation>K</variation>
    <location>
        <position position="209"/>
    </location>
</feature>
<evidence type="ECO:0000255" key="1">
    <source>
        <dbReference type="PROSITE-ProRule" id="PRU00981"/>
    </source>
</evidence>
<evidence type="ECO:0000256" key="2">
    <source>
        <dbReference type="SAM" id="MobiDB-lite"/>
    </source>
</evidence>
<evidence type="ECO:0000269" key="3">
    <source>
    </source>
</evidence>
<evidence type="ECO:0000269" key="4">
    <source>
    </source>
</evidence>
<evidence type="ECO:0000269" key="5">
    <source>
    </source>
</evidence>
<evidence type="ECO:0000269" key="6">
    <source>
    </source>
</evidence>
<evidence type="ECO:0000269" key="7">
    <source ref="8"/>
</evidence>
<evidence type="ECO:0000305" key="8"/>
<sequence length="373" mass="40298">MISQREEREEKKQRVMGDKKLISSSSSSSVYDTRINHHLHHPPSSSDEISQFLRHIFDRSSPLPSYYSPATTTTTASLIGVHGSGDPHADNSRSLVSHHPPSDSVLMSKRVGDFSEVLIGGGSGSAAACFGFSGGGNNNNVQGNSSGTRVSSSSVGASGNETDEYDCESEEGGEAVVDEAPSSKSGPSSRSSSKRCRAAEVHNLSEKRRRSRINEKMKALQSLIPNSNKTDKASMLDEAIEYLKQLQLQVQMLTMRNGINLHPLCLPGTTLHPLQLSQIRPPEATNDPLLNHTNQFASTSNAPEMINTVASSYALEPSIRSHFGPFPLLTSPVEMSREGGLTHPRLNIGHSNANITGEQALFDGQPDLKDRIT</sequence>
<accession>Q9FUA4</accession>
<accession>O23192</accession>
<accession>Q0WP18</accession>
<comment type="function">
    <text evidence="3 7">Transcription factor that plays a role in floral organogenesis. Promotes the growth of carpel margins and of pollen tract tissues derived from them.</text>
</comment>
<comment type="subunit">
    <text evidence="5 6 8">Homodimer (Probable). Interacts with HEC1, HEC2 and HEC3. Binds to RGL2 and RGA.</text>
</comment>
<comment type="interaction">
    <interactant intactId="EBI-1536703">
        <id>Q9FUA4</id>
    </interactant>
    <interactant intactId="EBI-401198">
        <id>Q9SKK0</id>
        <label>EBF1</label>
    </interactant>
    <organismsDiffer>false</organismsDiffer>
    <experiments>3</experiments>
</comment>
<comment type="interaction">
    <interactant intactId="EBI-1536703">
        <id>Q9FUA4</id>
    </interactant>
    <interactant intactId="EBI-1536925">
        <id>Q9FYK5</id>
        <label>ESR2</label>
    </interactant>
    <organismsDiffer>false</organismsDiffer>
    <experiments>3</experiments>
</comment>
<comment type="interaction">
    <interactant intactId="EBI-1536703">
        <id>Q9FUA4</id>
    </interactant>
    <interactant intactId="EBI-4426378">
        <id>Q39103</id>
        <label>GA3OX1</label>
    </interactant>
    <organismsDiffer>false</organismsDiffer>
    <experiments>3</experiments>
</comment>
<comment type="interaction">
    <interactant intactId="EBI-1536703">
        <id>Q9FUA4</id>
    </interactant>
    <interactant intactId="EBI-963606">
        <id>Q9LQT8</id>
        <label>GAI</label>
    </interactant>
    <organismsDiffer>false</organismsDiffer>
    <experiments>3</experiments>
</comment>
<comment type="interaction">
    <interactant intactId="EBI-1536703">
        <id>Q9FUA4</id>
    </interactant>
    <interactant intactId="EBI-1536696">
        <id>Q9FHA7</id>
        <label>HEC1</label>
    </interactant>
    <organismsDiffer>false</organismsDiffer>
    <experiments>3</experiments>
</comment>
<comment type="interaction">
    <interactant intactId="EBI-1536703">
        <id>Q9FUA4</id>
    </interactant>
    <interactant intactId="EBI-1536720">
        <id>Q9SND4</id>
        <label>HEC2</label>
    </interactant>
    <organismsDiffer>false</organismsDiffer>
    <experiments>3</experiments>
</comment>
<comment type="interaction">
    <interactant intactId="EBI-1536703">
        <id>Q9FUA4</id>
    </interactant>
    <interactant intactId="EBI-25524519">
        <id>A0A2H1ZEF6</id>
        <label>IAA15</label>
    </interactant>
    <organismsDiffer>false</organismsDiffer>
    <experiments>3</experiments>
</comment>
<comment type="interaction">
    <interactant intactId="EBI-1536703">
        <id>Q9FUA4</id>
    </interactant>
    <interactant intactId="EBI-632231">
        <id>O24407</id>
        <label>IAA16</label>
    </interactant>
    <organismsDiffer>false</organismsDiffer>
    <experiments>3</experiments>
</comment>
<comment type="interaction">
    <interactant intactId="EBI-1536703">
        <id>Q9FUA4</id>
    </interactant>
    <interactant intactId="EBI-632257">
        <id>O24409</id>
        <label>IAA19</label>
    </interactant>
    <organismsDiffer>false</organismsDiffer>
    <experiments>3</experiments>
</comment>
<comment type="interaction">
    <interactant intactId="EBI-1536703">
        <id>Q9FUA4</id>
    </interactant>
    <interactant intactId="EBI-3946459">
        <id>Q9C5X0</id>
        <label>IAA34</label>
    </interactant>
    <organismsDiffer>false</organismsDiffer>
    <experiments>3</experiments>
</comment>
<comment type="interaction">
    <interactant intactId="EBI-1536703">
        <id>Q9FUA4</id>
    </interactant>
    <interactant intactId="EBI-4446992">
        <id>O81313</id>
        <label>IND</label>
    </interactant>
    <organismsDiffer>false</organismsDiffer>
    <experiments>7</experiments>
</comment>
<comment type="interaction">
    <interactant intactId="EBI-1536703">
        <id>Q9FUA4</id>
    </interactant>
    <interactant intactId="EBI-1536703">
        <id>Q9FUA4</id>
        <label>SPT</label>
    </interactant>
    <organismsDiffer>false</organismsDiffer>
    <experiments>3</experiments>
</comment>
<comment type="interaction">
    <interactant intactId="EBI-1536703">
        <id>Q9FUA4</id>
    </interactant>
    <interactant intactId="EBI-15192297">
        <id>Q9LQF0</id>
        <label>TCP23</label>
    </interactant>
    <organismsDiffer>false</organismsDiffer>
    <experiments>3</experiments>
</comment>
<comment type="subcellular location">
    <subcellularLocation>
        <location evidence="1">Nucleus</location>
    </subcellularLocation>
</comment>
<comment type="tissue specificity">
    <text evidence="4">Expressed in lateral root caps, young leaves, stipules, maturing pith cells of the stem, differentiating vascular cells, shoot apical meristems and flowers.</text>
</comment>
<comment type="developmental stage">
    <text evidence="4">During flower initiation, expressed in the peripheral zone of the shoot apical meristem. Confined to the anlagen of successive flower buds yet to arise. Later expressed in abaxial and adaxial sepal primordia, but not in sepals. When sepals initiate, localized in the region interior to them. Within the gynoecium, detected in the initiating and developing medial regions, and then in the developing septum and stigma. SPT expression also occurs in sub-regions of developing ovules, and in the wall and dehiscence zone of the maturing fruit. As the petals develop, becomes restricted to the adaxial epidermis. In stamen expression increase in the vicinity of the archesporial cells and in cells undergoing divisions to produce sporogenous and secondary parietal cells of the anther locules. Expressed in the tapetum and microspore mother cells until the initiation of meiosis. Also detected in stomium and filaments.</text>
</comment>
<comment type="induction">
    <text evidence="4">Down-regulated by the A class gene AP2 in the first whorl and by ARF3/ETT in gynoecium.</text>
</comment>
<comment type="sequence caution" evidence="8">
    <conflict type="erroneous gene model prediction">
        <sequence resource="EMBL-CDS" id="CAB16798"/>
    </conflict>
</comment>
<comment type="sequence caution" evidence="8">
    <conflict type="erroneous gene model prediction">
        <sequence resource="EMBL-CDS" id="CAB80359"/>
    </conflict>
</comment>
<proteinExistence type="evidence at protein level"/>
<dbReference type="EMBL" id="AF319540">
    <property type="protein sequence ID" value="AAG33640.1"/>
    <property type="molecule type" value="mRNA"/>
</dbReference>
<dbReference type="EMBL" id="Z99707">
    <property type="protein sequence ID" value="CAB16798.1"/>
    <property type="status" value="ALT_SEQ"/>
    <property type="molecule type" value="Genomic_DNA"/>
</dbReference>
<dbReference type="EMBL" id="AL161590">
    <property type="protein sequence ID" value="CAB80359.1"/>
    <property type="status" value="ALT_SEQ"/>
    <property type="molecule type" value="Genomic_DNA"/>
</dbReference>
<dbReference type="EMBL" id="CP002687">
    <property type="protein sequence ID" value="AEE86720.1"/>
    <property type="molecule type" value="Genomic_DNA"/>
</dbReference>
<dbReference type="EMBL" id="AK229267">
    <property type="protein sequence ID" value="BAF01131.1"/>
    <property type="molecule type" value="mRNA"/>
</dbReference>
<dbReference type="EMBL" id="BT026462">
    <property type="protein sequence ID" value="ABH04569.1"/>
    <property type="molecule type" value="mRNA"/>
</dbReference>
<dbReference type="PIR" id="B85436">
    <property type="entry name" value="B85436"/>
</dbReference>
<dbReference type="RefSeq" id="NP_568010.1">
    <property type="nucleotide sequence ID" value="NM_119857.3"/>
</dbReference>
<dbReference type="SMR" id="Q9FUA4"/>
<dbReference type="BioGRID" id="15128">
    <property type="interactions" value="17"/>
</dbReference>
<dbReference type="FunCoup" id="Q9FUA4">
    <property type="interactions" value="137"/>
</dbReference>
<dbReference type="IntAct" id="Q9FUA4">
    <property type="interactions" value="19"/>
</dbReference>
<dbReference type="STRING" id="3702.Q9FUA4"/>
<dbReference type="GlyGen" id="Q9FUA4">
    <property type="glycosylation" value="2 sites, 1 O-linked glycan (2 sites)"/>
</dbReference>
<dbReference type="PaxDb" id="3702-AT4G36930.1"/>
<dbReference type="ProteomicsDB" id="228406"/>
<dbReference type="EnsemblPlants" id="AT4G36930.1">
    <property type="protein sequence ID" value="AT4G36930.1"/>
    <property type="gene ID" value="AT4G36930"/>
</dbReference>
<dbReference type="GeneID" id="829847"/>
<dbReference type="Gramene" id="AT4G36930.1">
    <property type="protein sequence ID" value="AT4G36930.1"/>
    <property type="gene ID" value="AT4G36930"/>
</dbReference>
<dbReference type="KEGG" id="ath:AT4G36930"/>
<dbReference type="Araport" id="AT4G36930"/>
<dbReference type="TAIR" id="AT4G36930">
    <property type="gene designation" value="SPT"/>
</dbReference>
<dbReference type="eggNOG" id="ENOG502QVNY">
    <property type="taxonomic scope" value="Eukaryota"/>
</dbReference>
<dbReference type="HOGENOM" id="CLU_049108_0_0_1"/>
<dbReference type="InParanoid" id="Q9FUA4"/>
<dbReference type="OMA" id="INLHPLC"/>
<dbReference type="PhylomeDB" id="Q9FUA4"/>
<dbReference type="PRO" id="PR:Q9FUA4"/>
<dbReference type="Proteomes" id="UP000006548">
    <property type="component" value="Chromosome 4"/>
</dbReference>
<dbReference type="ExpressionAtlas" id="Q9FUA4">
    <property type="expression patterns" value="baseline and differential"/>
</dbReference>
<dbReference type="GO" id="GO:0005634">
    <property type="term" value="C:nucleus"/>
    <property type="evidence" value="ECO:0000314"/>
    <property type="project" value="TAIR"/>
</dbReference>
<dbReference type="GO" id="GO:0003700">
    <property type="term" value="F:DNA-binding transcription factor activity"/>
    <property type="evidence" value="ECO:0000315"/>
    <property type="project" value="TAIR"/>
</dbReference>
<dbReference type="GO" id="GO:0042802">
    <property type="term" value="F:identical protein binding"/>
    <property type="evidence" value="ECO:0000353"/>
    <property type="project" value="IntAct"/>
</dbReference>
<dbReference type="GO" id="GO:0046983">
    <property type="term" value="F:protein dimerization activity"/>
    <property type="evidence" value="ECO:0007669"/>
    <property type="project" value="InterPro"/>
</dbReference>
<dbReference type="GO" id="GO:0000976">
    <property type="term" value="F:transcription cis-regulatory region binding"/>
    <property type="evidence" value="ECO:0000353"/>
    <property type="project" value="TAIR"/>
</dbReference>
<dbReference type="GO" id="GO:0048440">
    <property type="term" value="P:carpel development"/>
    <property type="evidence" value="ECO:0000315"/>
    <property type="project" value="TAIR"/>
</dbReference>
<dbReference type="GO" id="GO:0007623">
    <property type="term" value="P:circadian rhythm"/>
    <property type="evidence" value="ECO:0000270"/>
    <property type="project" value="TAIR"/>
</dbReference>
<dbReference type="GO" id="GO:0010154">
    <property type="term" value="P:fruit development"/>
    <property type="evidence" value="ECO:0000315"/>
    <property type="project" value="TAIR"/>
</dbReference>
<dbReference type="GO" id="GO:0010187">
    <property type="term" value="P:negative regulation of seed germination"/>
    <property type="evidence" value="ECO:0000315"/>
    <property type="project" value="TAIR"/>
</dbReference>
<dbReference type="GO" id="GO:0009409">
    <property type="term" value="P:response to cold"/>
    <property type="evidence" value="ECO:0000315"/>
    <property type="project" value="TAIR"/>
</dbReference>
<dbReference type="GO" id="GO:0010114">
    <property type="term" value="P:response to red light"/>
    <property type="evidence" value="ECO:0000315"/>
    <property type="project" value="TAIR"/>
</dbReference>
<dbReference type="CDD" id="cd11445">
    <property type="entry name" value="bHLH_AtPIF_like"/>
    <property type="match status" value="1"/>
</dbReference>
<dbReference type="FunFam" id="4.10.280.10:FF:000004">
    <property type="entry name" value="Basic helix-loop-helix transcription factor"/>
    <property type="match status" value="1"/>
</dbReference>
<dbReference type="Gene3D" id="4.10.280.10">
    <property type="entry name" value="Helix-loop-helix DNA-binding domain"/>
    <property type="match status" value="1"/>
</dbReference>
<dbReference type="InterPro" id="IPR031066">
    <property type="entry name" value="bHLH_ALC-like_plant"/>
</dbReference>
<dbReference type="InterPro" id="IPR011598">
    <property type="entry name" value="bHLH_dom"/>
</dbReference>
<dbReference type="InterPro" id="IPR036638">
    <property type="entry name" value="HLH_DNA-bd_sf"/>
</dbReference>
<dbReference type="InterPro" id="IPR047265">
    <property type="entry name" value="PIF1-like_bHLH"/>
</dbReference>
<dbReference type="PANTHER" id="PTHR45855">
    <property type="entry name" value="TRANSCRIPTION FACTOR PIF1-RELATED"/>
    <property type="match status" value="1"/>
</dbReference>
<dbReference type="PANTHER" id="PTHR45855:SF73">
    <property type="entry name" value="TRANSCRIPTION FACTOR SPATULA"/>
    <property type="match status" value="1"/>
</dbReference>
<dbReference type="Pfam" id="PF00010">
    <property type="entry name" value="HLH"/>
    <property type="match status" value="1"/>
</dbReference>
<dbReference type="SMART" id="SM00353">
    <property type="entry name" value="HLH"/>
    <property type="match status" value="1"/>
</dbReference>
<dbReference type="SUPFAM" id="SSF47459">
    <property type="entry name" value="HLH, helix-loop-helix DNA-binding domain"/>
    <property type="match status" value="1"/>
</dbReference>
<dbReference type="PROSITE" id="PS50888">
    <property type="entry name" value="BHLH"/>
    <property type="match status" value="1"/>
</dbReference>
<keyword id="KW-0217">Developmental protein</keyword>
<keyword id="KW-0238">DNA-binding</keyword>
<keyword id="KW-0539">Nucleus</keyword>
<keyword id="KW-1185">Reference proteome</keyword>
<keyword id="KW-0804">Transcription</keyword>
<keyword id="KW-0805">Transcription regulation</keyword>
<reference key="1">
    <citation type="journal article" date="2001" name="Development">
        <title>SPATULA, a gene that controls development of carpel margin tissues in Arabidopsis, encodes a bHLH protein.</title>
        <authorList>
            <person name="Heisler M.G.B."/>
            <person name="Atkinson A."/>
            <person name="Bylstra Y.H."/>
            <person name="Walsh R."/>
            <person name="Smyth D.R."/>
        </authorList>
    </citation>
    <scope>NUCLEOTIDE SEQUENCE [MRNA]</scope>
    <scope>INDUCTION</scope>
    <scope>DEVELOPMENTAL STAGE</scope>
    <scope>TISSUE SPECIFICITY</scope>
    <scope>MUTAGENESIS OF ARG-209</scope>
    <source>
        <strain>cv. Landsberg erecta</strain>
    </source>
</reference>
<reference key="2">
    <citation type="journal article" date="1998" name="Nature">
        <title>Analysis of 1.9 Mb of contiguous sequence from chromosome 4 of Arabidopsis thaliana.</title>
        <authorList>
            <person name="Bevan M."/>
            <person name="Bancroft I."/>
            <person name="Bent E."/>
            <person name="Love K."/>
            <person name="Goodman H.M."/>
            <person name="Dean C."/>
            <person name="Bergkamp R."/>
            <person name="Dirkse W."/>
            <person name="van Staveren M."/>
            <person name="Stiekema W."/>
            <person name="Drost L."/>
            <person name="Ridley P."/>
            <person name="Hudson S.-A."/>
            <person name="Patel K."/>
            <person name="Murphy G."/>
            <person name="Piffanelli P."/>
            <person name="Wedler H."/>
            <person name="Wedler E."/>
            <person name="Wambutt R."/>
            <person name="Weitzenegger T."/>
            <person name="Pohl T."/>
            <person name="Terryn N."/>
            <person name="Gielen J."/>
            <person name="Villarroel R."/>
            <person name="De Clercq R."/>
            <person name="van Montagu M."/>
            <person name="Lecharny A."/>
            <person name="Aubourg S."/>
            <person name="Gy I."/>
            <person name="Kreis M."/>
            <person name="Lao N."/>
            <person name="Kavanagh T."/>
            <person name="Hempel S."/>
            <person name="Kotter P."/>
            <person name="Entian K.-D."/>
            <person name="Rieger M."/>
            <person name="Schaefer M."/>
            <person name="Funk B."/>
            <person name="Mueller-Auer S."/>
            <person name="Silvey M."/>
            <person name="James R."/>
            <person name="Monfort A."/>
            <person name="Pons A."/>
            <person name="Puigdomenech P."/>
            <person name="Douka A."/>
            <person name="Voukelatou E."/>
            <person name="Milioni D."/>
            <person name="Hatzopoulos P."/>
            <person name="Piravandi E."/>
            <person name="Obermaier B."/>
            <person name="Hilbert H."/>
            <person name="Duesterhoeft A."/>
            <person name="Moores T."/>
            <person name="Jones J.D.G."/>
            <person name="Eneva T."/>
            <person name="Palme K."/>
            <person name="Benes V."/>
            <person name="Rechmann S."/>
            <person name="Ansorge W."/>
            <person name="Cooke R."/>
            <person name="Berger C."/>
            <person name="Delseny M."/>
            <person name="Voet M."/>
            <person name="Volckaert G."/>
            <person name="Mewes H.-W."/>
            <person name="Klosterman S."/>
            <person name="Schueller C."/>
            <person name="Chalwatzis N."/>
        </authorList>
    </citation>
    <scope>NUCLEOTIDE SEQUENCE [LARGE SCALE GENOMIC DNA]</scope>
    <source>
        <strain>cv. Columbia</strain>
    </source>
</reference>
<reference key="3">
    <citation type="journal article" date="1999" name="Nature">
        <title>Sequence and analysis of chromosome 4 of the plant Arabidopsis thaliana.</title>
        <authorList>
            <person name="Mayer K.F.X."/>
            <person name="Schueller C."/>
            <person name="Wambutt R."/>
            <person name="Murphy G."/>
            <person name="Volckaert G."/>
            <person name="Pohl T."/>
            <person name="Duesterhoeft A."/>
            <person name="Stiekema W."/>
            <person name="Entian K.-D."/>
            <person name="Terryn N."/>
            <person name="Harris B."/>
            <person name="Ansorge W."/>
            <person name="Brandt P."/>
            <person name="Grivell L.A."/>
            <person name="Rieger M."/>
            <person name="Weichselgartner M."/>
            <person name="de Simone V."/>
            <person name="Obermaier B."/>
            <person name="Mache R."/>
            <person name="Mueller M."/>
            <person name="Kreis M."/>
            <person name="Delseny M."/>
            <person name="Puigdomenech P."/>
            <person name="Watson M."/>
            <person name="Schmidtheini T."/>
            <person name="Reichert B."/>
            <person name="Portetelle D."/>
            <person name="Perez-Alonso M."/>
            <person name="Boutry M."/>
            <person name="Bancroft I."/>
            <person name="Vos P."/>
            <person name="Hoheisel J."/>
            <person name="Zimmermann W."/>
            <person name="Wedler H."/>
            <person name="Ridley P."/>
            <person name="Langham S.-A."/>
            <person name="McCullagh B."/>
            <person name="Bilham L."/>
            <person name="Robben J."/>
            <person name="van der Schueren J."/>
            <person name="Grymonprez B."/>
            <person name="Chuang Y.-J."/>
            <person name="Vandenbussche F."/>
            <person name="Braeken M."/>
            <person name="Weltjens I."/>
            <person name="Voet M."/>
            <person name="Bastiaens I."/>
            <person name="Aert R."/>
            <person name="Defoor E."/>
            <person name="Weitzenegger T."/>
            <person name="Bothe G."/>
            <person name="Ramsperger U."/>
            <person name="Hilbert H."/>
            <person name="Braun M."/>
            <person name="Holzer E."/>
            <person name="Brandt A."/>
            <person name="Peters S."/>
            <person name="van Staveren M."/>
            <person name="Dirkse W."/>
            <person name="Mooijman P."/>
            <person name="Klein Lankhorst R."/>
            <person name="Rose M."/>
            <person name="Hauf J."/>
            <person name="Koetter P."/>
            <person name="Berneiser S."/>
            <person name="Hempel S."/>
            <person name="Feldpausch M."/>
            <person name="Lamberth S."/>
            <person name="Van den Daele H."/>
            <person name="De Keyser A."/>
            <person name="Buysshaert C."/>
            <person name="Gielen J."/>
            <person name="Villarroel R."/>
            <person name="De Clercq R."/>
            <person name="van Montagu M."/>
            <person name="Rogers J."/>
            <person name="Cronin A."/>
            <person name="Quail M.A."/>
            <person name="Bray-Allen S."/>
            <person name="Clark L."/>
            <person name="Doggett J."/>
            <person name="Hall S."/>
            <person name="Kay M."/>
            <person name="Lennard N."/>
            <person name="McLay K."/>
            <person name="Mayes R."/>
            <person name="Pettett A."/>
            <person name="Rajandream M.A."/>
            <person name="Lyne M."/>
            <person name="Benes V."/>
            <person name="Rechmann S."/>
            <person name="Borkova D."/>
            <person name="Bloecker H."/>
            <person name="Scharfe M."/>
            <person name="Grimm M."/>
            <person name="Loehnert T.-H."/>
            <person name="Dose S."/>
            <person name="de Haan M."/>
            <person name="Maarse A.C."/>
            <person name="Schaefer M."/>
            <person name="Mueller-Auer S."/>
            <person name="Gabel C."/>
            <person name="Fuchs M."/>
            <person name="Fartmann B."/>
            <person name="Granderath K."/>
            <person name="Dauner D."/>
            <person name="Herzl A."/>
            <person name="Neumann S."/>
            <person name="Argiriou A."/>
            <person name="Vitale D."/>
            <person name="Liguori R."/>
            <person name="Piravandi E."/>
            <person name="Massenet O."/>
            <person name="Quigley F."/>
            <person name="Clabauld G."/>
            <person name="Muendlein A."/>
            <person name="Felber R."/>
            <person name="Schnabl S."/>
            <person name="Hiller R."/>
            <person name="Schmidt W."/>
            <person name="Lecharny A."/>
            <person name="Aubourg S."/>
            <person name="Chefdor F."/>
            <person name="Cooke R."/>
            <person name="Berger C."/>
            <person name="Monfort A."/>
            <person name="Casacuberta E."/>
            <person name="Gibbons T."/>
            <person name="Weber N."/>
            <person name="Vandenbol M."/>
            <person name="Bargues M."/>
            <person name="Terol J."/>
            <person name="Torres A."/>
            <person name="Perez-Perez A."/>
            <person name="Purnelle B."/>
            <person name="Bent E."/>
            <person name="Johnson S."/>
            <person name="Tacon D."/>
            <person name="Jesse T."/>
            <person name="Heijnen L."/>
            <person name="Schwarz S."/>
            <person name="Scholler P."/>
            <person name="Heber S."/>
            <person name="Francs P."/>
            <person name="Bielke C."/>
            <person name="Frishman D."/>
            <person name="Haase D."/>
            <person name="Lemcke K."/>
            <person name="Mewes H.-W."/>
            <person name="Stocker S."/>
            <person name="Zaccaria P."/>
            <person name="Bevan M."/>
            <person name="Wilson R.K."/>
            <person name="de la Bastide M."/>
            <person name="Habermann K."/>
            <person name="Parnell L."/>
            <person name="Dedhia N."/>
            <person name="Gnoj L."/>
            <person name="Schutz K."/>
            <person name="Huang E."/>
            <person name="Spiegel L."/>
            <person name="Sekhon M."/>
            <person name="Murray J."/>
            <person name="Sheet P."/>
            <person name="Cordes M."/>
            <person name="Abu-Threideh J."/>
            <person name="Stoneking T."/>
            <person name="Kalicki J."/>
            <person name="Graves T."/>
            <person name="Harmon G."/>
            <person name="Edwards J."/>
            <person name="Latreille P."/>
            <person name="Courtney L."/>
            <person name="Cloud J."/>
            <person name="Abbott A."/>
            <person name="Scott K."/>
            <person name="Johnson D."/>
            <person name="Minx P."/>
            <person name="Bentley D."/>
            <person name="Fulton B."/>
            <person name="Miller N."/>
            <person name="Greco T."/>
            <person name="Kemp K."/>
            <person name="Kramer J."/>
            <person name="Fulton L."/>
            <person name="Mardis E."/>
            <person name="Dante M."/>
            <person name="Pepin K."/>
            <person name="Hillier L.W."/>
            <person name="Nelson J."/>
            <person name="Spieth J."/>
            <person name="Ryan E."/>
            <person name="Andrews S."/>
            <person name="Geisel C."/>
            <person name="Layman D."/>
            <person name="Du H."/>
            <person name="Ali J."/>
            <person name="Berghoff A."/>
            <person name="Jones K."/>
            <person name="Drone K."/>
            <person name="Cotton M."/>
            <person name="Joshu C."/>
            <person name="Antonoiu B."/>
            <person name="Zidanic M."/>
            <person name="Strong C."/>
            <person name="Sun H."/>
            <person name="Lamar B."/>
            <person name="Yordan C."/>
            <person name="Ma P."/>
            <person name="Zhong J."/>
            <person name="Preston R."/>
            <person name="Vil D."/>
            <person name="Shekher M."/>
            <person name="Matero A."/>
            <person name="Shah R."/>
            <person name="Swaby I.K."/>
            <person name="O'Shaughnessy A."/>
            <person name="Rodriguez M."/>
            <person name="Hoffman J."/>
            <person name="Till S."/>
            <person name="Granat S."/>
            <person name="Shohdy N."/>
            <person name="Hasegawa A."/>
            <person name="Hameed A."/>
            <person name="Lodhi M."/>
            <person name="Johnson A."/>
            <person name="Chen E."/>
            <person name="Marra M.A."/>
            <person name="Martienssen R."/>
            <person name="McCombie W.R."/>
        </authorList>
    </citation>
    <scope>NUCLEOTIDE SEQUENCE [LARGE SCALE GENOMIC DNA]</scope>
    <source>
        <strain>cv. Columbia</strain>
    </source>
</reference>
<reference key="4">
    <citation type="journal article" date="2017" name="Plant J.">
        <title>Araport11: a complete reannotation of the Arabidopsis thaliana reference genome.</title>
        <authorList>
            <person name="Cheng C.Y."/>
            <person name="Krishnakumar V."/>
            <person name="Chan A.P."/>
            <person name="Thibaud-Nissen F."/>
            <person name="Schobel S."/>
            <person name="Town C.D."/>
        </authorList>
    </citation>
    <scope>GENOME REANNOTATION</scope>
    <source>
        <strain>cv. Columbia</strain>
    </source>
</reference>
<reference key="5">
    <citation type="submission" date="2006-07" db="EMBL/GenBank/DDBJ databases">
        <title>Large-scale analysis of RIKEN Arabidopsis full-length (RAFL) cDNAs.</title>
        <authorList>
            <person name="Totoki Y."/>
            <person name="Seki M."/>
            <person name="Ishida J."/>
            <person name="Nakajima M."/>
            <person name="Enju A."/>
            <person name="Kamiya A."/>
            <person name="Narusaka M."/>
            <person name="Shin-i T."/>
            <person name="Nakagawa M."/>
            <person name="Sakamoto N."/>
            <person name="Oishi K."/>
            <person name="Kohara Y."/>
            <person name="Kobayashi M."/>
            <person name="Toyoda A."/>
            <person name="Sakaki Y."/>
            <person name="Sakurai T."/>
            <person name="Iida K."/>
            <person name="Akiyama K."/>
            <person name="Satou M."/>
            <person name="Toyoda T."/>
            <person name="Konagaya A."/>
            <person name="Carninci P."/>
            <person name="Kawai J."/>
            <person name="Hayashizaki Y."/>
            <person name="Shinozaki K."/>
        </authorList>
    </citation>
    <scope>NUCLEOTIDE SEQUENCE [LARGE SCALE MRNA]</scope>
    <source>
        <strain>cv. Columbia</strain>
    </source>
</reference>
<reference key="6">
    <citation type="submission" date="2006-08" db="EMBL/GenBank/DDBJ databases">
        <title>Arabidopsis ORF clones.</title>
        <authorList>
            <person name="Quinitio C."/>
            <person name="Chen H."/>
            <person name="Kim C.J."/>
            <person name="Shinn P."/>
            <person name="Ecker J.R."/>
        </authorList>
    </citation>
    <scope>NUCLEOTIDE SEQUENCE [LARGE SCALE MRNA]</scope>
    <source>
        <strain>cv. Columbia</strain>
    </source>
</reference>
<reference key="7">
    <citation type="journal article" date="1999" name="Development">
        <title>CRABS CLAW and SPATULA, two Arabidopsis genes that control carpel development in parallel with AGAMOUS.</title>
        <authorList>
            <person name="Alvarez J."/>
            <person name="Smyth D.R."/>
        </authorList>
    </citation>
    <scope>FUNCTION</scope>
</reference>
<reference key="8">
    <citation type="journal article" date="2002" name="Int. J. Plant Sci.">
        <title>CRABS CLAW and SPATULA genes regulate growth and pattern formation during gynoecium development in Arabidopsis thaliana.</title>
        <authorList>
            <person name="Alvarez J."/>
            <person name="Smyth D.R."/>
        </authorList>
        <dbReference type="AGRICOLA" id="IND23265209"/>
    </citation>
    <scope>FUNCTION</scope>
</reference>
<reference key="9">
    <citation type="journal article" date="2003" name="Mol. Biol. Evol.">
        <title>The basic helix-loop-helix transcription factor family in plants: a genome-wide study of protein structure and functional diversity.</title>
        <authorList>
            <person name="Heim M.A."/>
            <person name="Jakoby M."/>
            <person name="Werber M."/>
            <person name="Martin C."/>
            <person name="Weisshaar B."/>
            <person name="Bailey P.C."/>
        </authorList>
    </citation>
    <scope>GENE FAMILY</scope>
    <scope>NOMENCLATURE</scope>
</reference>
<reference key="10">
    <citation type="journal article" date="2003" name="Plant Cell">
        <title>The Arabidopsis basic/helix-loop-helix transcription factor family.</title>
        <authorList>
            <person name="Toledo-Ortiz G."/>
            <person name="Huq E."/>
            <person name="Quail P.H."/>
        </authorList>
    </citation>
    <scope>GENE FAMILY</scope>
</reference>
<reference key="11">
    <citation type="journal article" date="2003" name="Plant Cell">
        <title>Update on the basic helix-loop-helix transcription factor gene family in Arabidopsis thaliana.</title>
        <authorList>
            <person name="Bailey P.C."/>
            <person name="Martin C."/>
            <person name="Toledo-Ortiz G."/>
            <person name="Quail P.H."/>
            <person name="Huq E."/>
            <person name="Heim M.A."/>
            <person name="Jakoby M."/>
            <person name="Werber M."/>
            <person name="Weisshaar B."/>
        </authorList>
    </citation>
    <scope>GENE FAMILY</scope>
    <scope>NOMENCLATURE</scope>
</reference>
<reference key="12">
    <citation type="journal article" date="2007" name="Development">
        <title>The HECATE genes regulate female reproductive tract development in Arabidopsis thaliana.</title>
        <authorList>
            <person name="Gremski K."/>
            <person name="Ditta G."/>
            <person name="Yanofsky M.F."/>
        </authorList>
    </citation>
    <scope>INTERACTION WITH HEC1; HEC2 AND HEC3</scope>
</reference>
<reference key="13">
    <citation type="journal article" date="2010" name="Mol. Biol. Evol.">
        <title>Transcriptional diversification and functional conservation between DELLA proteins in Arabidopsis.</title>
        <authorList>
            <person name="Gallego-Bartolome J."/>
            <person name="Minguet E.G."/>
            <person name="Marin J.A."/>
            <person name="Prat S."/>
            <person name="Blazquez M.A."/>
            <person name="Alabadi D."/>
        </authorList>
    </citation>
    <scope>INTERACTION WITH RGL2 AND RGA</scope>
    <source>
        <strain>cv. Landsberg erecta</strain>
    </source>
</reference>
<organism>
    <name type="scientific">Arabidopsis thaliana</name>
    <name type="common">Mouse-ear cress</name>
    <dbReference type="NCBI Taxonomy" id="3702"/>
    <lineage>
        <taxon>Eukaryota</taxon>
        <taxon>Viridiplantae</taxon>
        <taxon>Streptophyta</taxon>
        <taxon>Embryophyta</taxon>
        <taxon>Tracheophyta</taxon>
        <taxon>Spermatophyta</taxon>
        <taxon>Magnoliopsida</taxon>
        <taxon>eudicotyledons</taxon>
        <taxon>Gunneridae</taxon>
        <taxon>Pentapetalae</taxon>
        <taxon>rosids</taxon>
        <taxon>malvids</taxon>
        <taxon>Brassicales</taxon>
        <taxon>Brassicaceae</taxon>
        <taxon>Camelineae</taxon>
        <taxon>Arabidopsis</taxon>
    </lineage>
</organism>